<evidence type="ECO:0000255" key="1">
    <source>
        <dbReference type="HAMAP-Rule" id="MF_01456"/>
    </source>
</evidence>
<sequence length="102" mass="11131">MYIDITHYLTVSALMFTIGIAGIFLNRKNVIIILMSIELILLSVNINFVAFSAFLHDLVGQIFALFVLTVAAAEAAIGLAILVVFFRNRGSIAVEDVNVMKG</sequence>
<organism>
    <name type="scientific">Bartonella tribocorum (strain CIP 105476 / IBS 506)</name>
    <dbReference type="NCBI Taxonomy" id="382640"/>
    <lineage>
        <taxon>Bacteria</taxon>
        <taxon>Pseudomonadati</taxon>
        <taxon>Pseudomonadota</taxon>
        <taxon>Alphaproteobacteria</taxon>
        <taxon>Hyphomicrobiales</taxon>
        <taxon>Bartonellaceae</taxon>
        <taxon>Bartonella</taxon>
    </lineage>
</organism>
<accession>A9IUM6</accession>
<protein>
    <recommendedName>
        <fullName evidence="1">NADH-quinone oxidoreductase subunit K</fullName>
        <ecNumber evidence="1">7.1.1.-</ecNumber>
    </recommendedName>
    <alternativeName>
        <fullName evidence="1">NADH dehydrogenase I subunit K</fullName>
    </alternativeName>
    <alternativeName>
        <fullName evidence="1">NDH-1 subunit K</fullName>
    </alternativeName>
</protein>
<reference key="1">
    <citation type="journal article" date="2007" name="Nat. Genet.">
        <title>Genomic analysis of Bartonella identifies type IV secretion systems as host adaptability factors.</title>
        <authorList>
            <person name="Saenz H.L."/>
            <person name="Engel P."/>
            <person name="Stoeckli M.C."/>
            <person name="Lanz C."/>
            <person name="Raddatz G."/>
            <person name="Vayssier-Taussat M."/>
            <person name="Birtles R."/>
            <person name="Schuster S.C."/>
            <person name="Dehio C."/>
        </authorList>
    </citation>
    <scope>NUCLEOTIDE SEQUENCE [LARGE SCALE GENOMIC DNA]</scope>
    <source>
        <strain>CIP 105476 / IBS 506</strain>
    </source>
</reference>
<name>NUOK_BART1</name>
<gene>
    <name evidence="1" type="primary">nuoK</name>
    <name type="ordered locus">BT_1207</name>
</gene>
<dbReference type="EC" id="7.1.1.-" evidence="1"/>
<dbReference type="EMBL" id="AM260525">
    <property type="protein sequence ID" value="CAK01577.1"/>
    <property type="molecule type" value="Genomic_DNA"/>
</dbReference>
<dbReference type="RefSeq" id="WP_012231780.1">
    <property type="nucleotide sequence ID" value="NC_010161.1"/>
</dbReference>
<dbReference type="SMR" id="A9IUM6"/>
<dbReference type="KEGG" id="btr:BT_1207"/>
<dbReference type="eggNOG" id="COG0713">
    <property type="taxonomic scope" value="Bacteria"/>
</dbReference>
<dbReference type="HOGENOM" id="CLU_144724_2_0_5"/>
<dbReference type="Proteomes" id="UP000001592">
    <property type="component" value="Chromosome"/>
</dbReference>
<dbReference type="GO" id="GO:0030964">
    <property type="term" value="C:NADH dehydrogenase complex"/>
    <property type="evidence" value="ECO:0007669"/>
    <property type="project" value="TreeGrafter"/>
</dbReference>
<dbReference type="GO" id="GO:0005886">
    <property type="term" value="C:plasma membrane"/>
    <property type="evidence" value="ECO:0007669"/>
    <property type="project" value="UniProtKB-SubCell"/>
</dbReference>
<dbReference type="GO" id="GO:0050136">
    <property type="term" value="F:NADH:ubiquinone reductase (non-electrogenic) activity"/>
    <property type="evidence" value="ECO:0007669"/>
    <property type="project" value="UniProtKB-UniRule"/>
</dbReference>
<dbReference type="GO" id="GO:0048038">
    <property type="term" value="F:quinone binding"/>
    <property type="evidence" value="ECO:0007669"/>
    <property type="project" value="UniProtKB-KW"/>
</dbReference>
<dbReference type="GO" id="GO:0042773">
    <property type="term" value="P:ATP synthesis coupled electron transport"/>
    <property type="evidence" value="ECO:0007669"/>
    <property type="project" value="InterPro"/>
</dbReference>
<dbReference type="FunFam" id="1.10.287.3510:FF:000001">
    <property type="entry name" value="NADH-quinone oxidoreductase subunit K"/>
    <property type="match status" value="1"/>
</dbReference>
<dbReference type="Gene3D" id="1.10.287.3510">
    <property type="match status" value="1"/>
</dbReference>
<dbReference type="HAMAP" id="MF_01456">
    <property type="entry name" value="NDH1_NuoK"/>
    <property type="match status" value="1"/>
</dbReference>
<dbReference type="InterPro" id="IPR001133">
    <property type="entry name" value="NADH_UbQ_OxRdtase_chain4L/K"/>
</dbReference>
<dbReference type="InterPro" id="IPR039428">
    <property type="entry name" value="NUOK/Mnh_C1-like"/>
</dbReference>
<dbReference type="NCBIfam" id="NF004320">
    <property type="entry name" value="PRK05715.1-2"/>
    <property type="match status" value="1"/>
</dbReference>
<dbReference type="NCBIfam" id="NF004321">
    <property type="entry name" value="PRK05715.1-3"/>
    <property type="match status" value="1"/>
</dbReference>
<dbReference type="NCBIfam" id="NF004323">
    <property type="entry name" value="PRK05715.1-5"/>
    <property type="match status" value="1"/>
</dbReference>
<dbReference type="PANTHER" id="PTHR11434:SF21">
    <property type="entry name" value="NADH DEHYDROGENASE SUBUNIT 4L-RELATED"/>
    <property type="match status" value="1"/>
</dbReference>
<dbReference type="PANTHER" id="PTHR11434">
    <property type="entry name" value="NADH-UBIQUINONE OXIDOREDUCTASE SUBUNIT ND4L"/>
    <property type="match status" value="1"/>
</dbReference>
<dbReference type="Pfam" id="PF00420">
    <property type="entry name" value="Oxidored_q2"/>
    <property type="match status" value="1"/>
</dbReference>
<comment type="function">
    <text evidence="1">NDH-1 shuttles electrons from NADH, via FMN and iron-sulfur (Fe-S) centers, to quinones in the respiratory chain. The immediate electron acceptor for the enzyme in this species is believed to be ubiquinone. Couples the redox reaction to proton translocation (for every two electrons transferred, four hydrogen ions are translocated across the cytoplasmic membrane), and thus conserves the redox energy in a proton gradient.</text>
</comment>
<comment type="catalytic activity">
    <reaction evidence="1">
        <text>a quinone + NADH + 5 H(+)(in) = a quinol + NAD(+) + 4 H(+)(out)</text>
        <dbReference type="Rhea" id="RHEA:57888"/>
        <dbReference type="ChEBI" id="CHEBI:15378"/>
        <dbReference type="ChEBI" id="CHEBI:24646"/>
        <dbReference type="ChEBI" id="CHEBI:57540"/>
        <dbReference type="ChEBI" id="CHEBI:57945"/>
        <dbReference type="ChEBI" id="CHEBI:132124"/>
    </reaction>
</comment>
<comment type="subunit">
    <text evidence="1">NDH-1 is composed of 14 different subunits. Subunits NuoA, H, J, K, L, M, N constitute the membrane sector of the complex.</text>
</comment>
<comment type="subcellular location">
    <subcellularLocation>
        <location evidence="1">Cell inner membrane</location>
        <topology evidence="1">Multi-pass membrane protein</topology>
    </subcellularLocation>
</comment>
<comment type="similarity">
    <text evidence="1">Belongs to the complex I subunit 4L family.</text>
</comment>
<feature type="chain" id="PRO_0000389955" description="NADH-quinone oxidoreductase subunit K">
    <location>
        <begin position="1"/>
        <end position="102"/>
    </location>
</feature>
<feature type="transmembrane region" description="Helical" evidence="1">
    <location>
        <begin position="5"/>
        <end position="25"/>
    </location>
</feature>
<feature type="transmembrane region" description="Helical" evidence="1">
    <location>
        <begin position="31"/>
        <end position="51"/>
    </location>
</feature>
<feature type="transmembrane region" description="Helical" evidence="1">
    <location>
        <begin position="66"/>
        <end position="86"/>
    </location>
</feature>
<proteinExistence type="inferred from homology"/>
<keyword id="KW-0997">Cell inner membrane</keyword>
<keyword id="KW-1003">Cell membrane</keyword>
<keyword id="KW-0472">Membrane</keyword>
<keyword id="KW-0520">NAD</keyword>
<keyword id="KW-0874">Quinone</keyword>
<keyword id="KW-1278">Translocase</keyword>
<keyword id="KW-0812">Transmembrane</keyword>
<keyword id="KW-1133">Transmembrane helix</keyword>
<keyword id="KW-0813">Transport</keyword>
<keyword id="KW-0830">Ubiquinone</keyword>